<proteinExistence type="inferred from homology"/>
<sequence length="369" mass="40024">MTKKVAVLPGDGVGTEVTKGAVAVLKAIGERFDHQFEFTYGLIGGAAIDEAGTPLPESTIETCKQADAVLLGSVGGPKWDRNPSHLRPEKGLLAIRKELDLYANLRPVTFYDSLADASPLKKEYIEGVDFIIVRELTGGLYFGKPSERRTEGNKETVVDTLFYKRTEIERIIRQAFDTAVNRRKKVTSVDKANVLESSRVWREVAEEVAKDYPDVELEHMLVDSAAMQLIRNPKYFDVVVTENMFGDILSDEASMLTGSLGMLPSASLTADGPSLYEPVHGSAPDIAGQNKANPIAAILSAAMLLRHSFGLEKEAAVIEQAVESVLHAGHRTADLADGNHYLGTDKMVEAITAVIANDSAISSIMTAYS</sequence>
<gene>
    <name type="primary">leuB</name>
    <name type="synonym">leuC</name>
    <name type="ordered locus">BMD_4682</name>
</gene>
<organism>
    <name type="scientific">Priestia megaterium (strain DSM 319 / IMG 1521)</name>
    <name type="common">Bacillus megaterium</name>
    <dbReference type="NCBI Taxonomy" id="592022"/>
    <lineage>
        <taxon>Bacteria</taxon>
        <taxon>Bacillati</taxon>
        <taxon>Bacillota</taxon>
        <taxon>Bacilli</taxon>
        <taxon>Bacillales</taxon>
        <taxon>Bacillaceae</taxon>
        <taxon>Priestia</taxon>
    </lineage>
</organism>
<dbReference type="EC" id="1.1.1.85"/>
<dbReference type="EMBL" id="X65184">
    <property type="protein sequence ID" value="CAA46295.1"/>
    <property type="molecule type" value="Genomic_DNA"/>
</dbReference>
<dbReference type="EMBL" id="CP001982">
    <property type="protein sequence ID" value="ADF41506.1"/>
    <property type="molecule type" value="Genomic_DNA"/>
</dbReference>
<dbReference type="PIR" id="I40226">
    <property type="entry name" value="I40226"/>
</dbReference>
<dbReference type="RefSeq" id="WP_013085139.1">
    <property type="nucleotide sequence ID" value="NC_014103.1"/>
</dbReference>
<dbReference type="SMR" id="P41019"/>
<dbReference type="KEGG" id="bmd:BMD_4682"/>
<dbReference type="PATRIC" id="fig|592022.4.peg.4680"/>
<dbReference type="HOGENOM" id="CLU_031953_0_3_9"/>
<dbReference type="UniPathway" id="UPA00048">
    <property type="reaction ID" value="UER00072"/>
</dbReference>
<dbReference type="Proteomes" id="UP000002365">
    <property type="component" value="Chromosome"/>
</dbReference>
<dbReference type="GO" id="GO:0005829">
    <property type="term" value="C:cytosol"/>
    <property type="evidence" value="ECO:0007669"/>
    <property type="project" value="TreeGrafter"/>
</dbReference>
<dbReference type="GO" id="GO:0003862">
    <property type="term" value="F:3-isopropylmalate dehydrogenase activity"/>
    <property type="evidence" value="ECO:0007669"/>
    <property type="project" value="UniProtKB-UniRule"/>
</dbReference>
<dbReference type="GO" id="GO:0000287">
    <property type="term" value="F:magnesium ion binding"/>
    <property type="evidence" value="ECO:0007669"/>
    <property type="project" value="InterPro"/>
</dbReference>
<dbReference type="GO" id="GO:0051287">
    <property type="term" value="F:NAD binding"/>
    <property type="evidence" value="ECO:0007669"/>
    <property type="project" value="InterPro"/>
</dbReference>
<dbReference type="GO" id="GO:0009098">
    <property type="term" value="P:L-leucine biosynthetic process"/>
    <property type="evidence" value="ECO:0007669"/>
    <property type="project" value="UniProtKB-UniRule"/>
</dbReference>
<dbReference type="FunFam" id="3.40.718.10:FF:000028">
    <property type="entry name" value="3-isopropylmalate dehydrogenase"/>
    <property type="match status" value="1"/>
</dbReference>
<dbReference type="Gene3D" id="3.40.718.10">
    <property type="entry name" value="Isopropylmalate Dehydrogenase"/>
    <property type="match status" value="1"/>
</dbReference>
<dbReference type="HAMAP" id="MF_01033">
    <property type="entry name" value="LeuB_type1"/>
    <property type="match status" value="1"/>
</dbReference>
<dbReference type="InterPro" id="IPR019818">
    <property type="entry name" value="IsoCit/isopropylmalate_DH_CS"/>
</dbReference>
<dbReference type="InterPro" id="IPR024084">
    <property type="entry name" value="IsoPropMal-DH-like_dom"/>
</dbReference>
<dbReference type="InterPro" id="IPR004429">
    <property type="entry name" value="Isopropylmalate_DH"/>
</dbReference>
<dbReference type="NCBIfam" id="TIGR00169">
    <property type="entry name" value="leuB"/>
    <property type="match status" value="1"/>
</dbReference>
<dbReference type="PANTHER" id="PTHR42979">
    <property type="entry name" value="3-ISOPROPYLMALATE DEHYDROGENASE"/>
    <property type="match status" value="1"/>
</dbReference>
<dbReference type="PANTHER" id="PTHR42979:SF1">
    <property type="entry name" value="3-ISOPROPYLMALATE DEHYDROGENASE"/>
    <property type="match status" value="1"/>
</dbReference>
<dbReference type="Pfam" id="PF00180">
    <property type="entry name" value="Iso_dh"/>
    <property type="match status" value="1"/>
</dbReference>
<dbReference type="SMART" id="SM01329">
    <property type="entry name" value="Iso_dh"/>
    <property type="match status" value="1"/>
</dbReference>
<dbReference type="SUPFAM" id="SSF53659">
    <property type="entry name" value="Isocitrate/Isopropylmalate dehydrogenase-like"/>
    <property type="match status" value="1"/>
</dbReference>
<dbReference type="PROSITE" id="PS00470">
    <property type="entry name" value="IDH_IMDH"/>
    <property type="match status" value="1"/>
</dbReference>
<feature type="chain" id="PRO_0000083641" description="3-isopropylmalate dehydrogenase">
    <location>
        <begin position="1"/>
        <end position="369"/>
    </location>
</feature>
<feature type="binding site" evidence="1">
    <location>
        <begin position="76"/>
        <end position="89"/>
    </location>
    <ligand>
        <name>NAD(+)</name>
        <dbReference type="ChEBI" id="CHEBI:57540"/>
    </ligand>
</feature>
<feature type="binding site" evidence="1">
    <location>
        <position position="96"/>
    </location>
    <ligand>
        <name>substrate</name>
    </ligand>
</feature>
<feature type="binding site" evidence="1">
    <location>
        <position position="106"/>
    </location>
    <ligand>
        <name>substrate</name>
    </ligand>
</feature>
<feature type="binding site" evidence="1">
    <location>
        <position position="134"/>
    </location>
    <ligand>
        <name>substrate</name>
    </ligand>
</feature>
<feature type="binding site" evidence="1">
    <location>
        <position position="223"/>
    </location>
    <ligand>
        <name>Mg(2+)</name>
        <dbReference type="ChEBI" id="CHEBI:18420"/>
    </ligand>
</feature>
<feature type="binding site" evidence="1">
    <location>
        <position position="223"/>
    </location>
    <ligand>
        <name>substrate</name>
    </ligand>
</feature>
<feature type="binding site" evidence="1">
    <location>
        <position position="247"/>
    </location>
    <ligand>
        <name>Mg(2+)</name>
        <dbReference type="ChEBI" id="CHEBI:18420"/>
    </ligand>
</feature>
<feature type="binding site" evidence="1">
    <location>
        <position position="251"/>
    </location>
    <ligand>
        <name>Mg(2+)</name>
        <dbReference type="ChEBI" id="CHEBI:18420"/>
    </ligand>
</feature>
<feature type="binding site" evidence="1">
    <location>
        <begin position="281"/>
        <end position="293"/>
    </location>
    <ligand>
        <name>NAD(+)</name>
        <dbReference type="ChEBI" id="CHEBI:57540"/>
    </ligand>
</feature>
<feature type="site" description="Important for catalysis" evidence="1">
    <location>
        <position position="141"/>
    </location>
</feature>
<feature type="site" description="Important for catalysis" evidence="1">
    <location>
        <position position="191"/>
    </location>
</feature>
<feature type="sequence conflict" description="In Ref. 1; CAA46295." evidence="2" ref="1">
    <original>VGTEVTKGAVAV</original>
    <variation>GQSNQRRCCR</variation>
    <location>
        <begin position="13"/>
        <end position="24"/>
    </location>
</feature>
<feature type="sequence conflict" description="In Ref. 1; CAA46295." evidence="2" ref="1">
    <original>FD</original>
    <variation>LR</variation>
    <location>
        <begin position="32"/>
        <end position="33"/>
    </location>
</feature>
<feature type="sequence conflict" description="In Ref. 1; CAA46295." evidence="2" ref="1">
    <original>TPLPE</original>
    <variation>SSSSR</variation>
    <location>
        <begin position="53"/>
        <end position="57"/>
    </location>
</feature>
<feature type="sequence conflict" description="In Ref. 1; CAA46295." evidence="2" ref="1">
    <original>KQ</original>
    <variation>NE</variation>
    <location>
        <begin position="64"/>
        <end position="65"/>
    </location>
</feature>
<feature type="sequence conflict" description="In Ref. 1; CAA46295." evidence="2" ref="1">
    <original>N</original>
    <variation>F</variation>
    <location>
        <position position="82"/>
    </location>
</feature>
<feature type="sequence conflict" description="In Ref. 1; CAA46295." evidence="2" ref="1">
    <original>E</original>
    <variation>D</variation>
    <location>
        <position position="147"/>
    </location>
</feature>
<feature type="sequence conflict" description="In Ref. 1; CAA46295." evidence="2" ref="1">
    <original>RQAF</original>
    <variation>ASI</variation>
    <location>
        <begin position="173"/>
        <end position="176"/>
    </location>
</feature>
<feature type="sequence conflict" description="In Ref. 1; CAA46295." evidence="2" ref="1">
    <original>A</original>
    <variation>AA</variation>
    <location>
        <position position="297"/>
    </location>
</feature>
<feature type="sequence conflict" description="In Ref. 1; CAA46295." evidence="2" ref="1">
    <original>A</original>
    <variation>V</variation>
    <location>
        <position position="350"/>
    </location>
</feature>
<feature type="sequence conflict" description="In Ref. 1; CAA46295." evidence="2" ref="1">
    <original>YS</original>
    <variation>SR</variation>
    <location>
        <begin position="368"/>
        <end position="369"/>
    </location>
</feature>
<keyword id="KW-0028">Amino-acid biosynthesis</keyword>
<keyword id="KW-0100">Branched-chain amino acid biosynthesis</keyword>
<keyword id="KW-0963">Cytoplasm</keyword>
<keyword id="KW-0432">Leucine biosynthesis</keyword>
<keyword id="KW-0460">Magnesium</keyword>
<keyword id="KW-0464">Manganese</keyword>
<keyword id="KW-0479">Metal-binding</keyword>
<keyword id="KW-0520">NAD</keyword>
<keyword id="KW-0560">Oxidoreductase</keyword>
<name>LEU3_PRIM3</name>
<reference key="1">
    <citation type="journal article" date="1994" name="Appl. Microbiol. Biotechnol.">
        <title>Cloning and sequencing of the leu C and npr M genes and a putative spo IV gene from Bacillus megaterium DSM319.</title>
        <authorList>
            <person name="Meinhardt F."/>
            <person name="Busskamp M."/>
            <person name="Wittchen K.D."/>
        </authorList>
    </citation>
    <scope>NUCLEOTIDE SEQUENCE [GENOMIC DNA]</scope>
</reference>
<reference key="2">
    <citation type="journal article" date="2011" name="J. Bacteriol.">
        <title>Genome sequences of the biotechnologically important Bacillus megaterium strains QM B1551 and DSM319.</title>
        <authorList>
            <person name="Eppinger M."/>
            <person name="Bunk B."/>
            <person name="Johns M.A."/>
            <person name="Edirisinghe J.N."/>
            <person name="Kutumbaka K.K."/>
            <person name="Koenig S.S."/>
            <person name="Creasy H.H."/>
            <person name="Rosovitz M.J."/>
            <person name="Riley D.R."/>
            <person name="Daugherty S."/>
            <person name="Martin M."/>
            <person name="Elbourne L.D."/>
            <person name="Paulsen I."/>
            <person name="Biedendieck R."/>
            <person name="Braun C."/>
            <person name="Grayburn S."/>
            <person name="Dhingra S."/>
            <person name="Lukyanchuk V."/>
            <person name="Ball B."/>
            <person name="Ul-Qamar R."/>
            <person name="Seibel J."/>
            <person name="Bremer E."/>
            <person name="Jahn D."/>
            <person name="Ravel J."/>
            <person name="Vary P.S."/>
        </authorList>
    </citation>
    <scope>NUCLEOTIDE SEQUENCE [LARGE SCALE GENOMIC DNA]</scope>
    <source>
        <strain>DSM 319 / IMG 1521</strain>
    </source>
</reference>
<comment type="function">
    <text evidence="1">Catalyzes the oxidation of 3-carboxy-2-hydroxy-4-methylpentanoate (3-isopropylmalate) to 3-carboxy-4-methyl-2-oxopentanoate. The product decarboxylates to 4-methyl-2 oxopentanoate (By similarity).</text>
</comment>
<comment type="catalytic activity">
    <reaction>
        <text>(2R,3S)-3-isopropylmalate + NAD(+) = 4-methyl-2-oxopentanoate + CO2 + NADH</text>
        <dbReference type="Rhea" id="RHEA:32271"/>
        <dbReference type="ChEBI" id="CHEBI:16526"/>
        <dbReference type="ChEBI" id="CHEBI:17865"/>
        <dbReference type="ChEBI" id="CHEBI:35121"/>
        <dbReference type="ChEBI" id="CHEBI:57540"/>
        <dbReference type="ChEBI" id="CHEBI:57945"/>
        <dbReference type="EC" id="1.1.1.85"/>
    </reaction>
</comment>
<comment type="cofactor">
    <cofactor evidence="1">
        <name>Mg(2+)</name>
        <dbReference type="ChEBI" id="CHEBI:18420"/>
    </cofactor>
    <cofactor evidence="1">
        <name>Mn(2+)</name>
        <dbReference type="ChEBI" id="CHEBI:29035"/>
    </cofactor>
    <text evidence="1">Binds 1 Mg(2+) or Mn(2+) ion per subunit.</text>
</comment>
<comment type="pathway">
    <text>Amino-acid biosynthesis; L-leucine biosynthesis; L-leucine from 3-methyl-2-oxobutanoate: step 3/4.</text>
</comment>
<comment type="subunit">
    <text evidence="1">Homodimer.</text>
</comment>
<comment type="subcellular location">
    <subcellularLocation>
        <location evidence="1">Cytoplasm</location>
    </subcellularLocation>
</comment>
<comment type="similarity">
    <text evidence="2">Belongs to the isocitrate and isopropylmalate dehydrogenases family. LeuB type 1 subfamily.</text>
</comment>
<evidence type="ECO:0000250" key="1"/>
<evidence type="ECO:0000305" key="2"/>
<accession>P41019</accession>
<accession>D5DLN0</accession>
<protein>
    <recommendedName>
        <fullName>3-isopropylmalate dehydrogenase</fullName>
        <ecNumber>1.1.1.85</ecNumber>
    </recommendedName>
    <alternativeName>
        <fullName>3-IPM-DH</fullName>
    </alternativeName>
    <alternativeName>
        <fullName>Beta-IPM dehydrogenase</fullName>
        <shortName>IMDH</shortName>
    </alternativeName>
</protein>